<dbReference type="EC" id="7.1.1.-" evidence="1"/>
<dbReference type="EMBL" id="CP000804">
    <property type="protein sequence ID" value="ABU59432.1"/>
    <property type="molecule type" value="Genomic_DNA"/>
</dbReference>
<dbReference type="SMR" id="A7NPD6"/>
<dbReference type="STRING" id="383372.Rcas_3382"/>
<dbReference type="KEGG" id="rca:Rcas_3382"/>
<dbReference type="eggNOG" id="COG1007">
    <property type="taxonomic scope" value="Bacteria"/>
</dbReference>
<dbReference type="HOGENOM" id="CLU_007100_1_5_0"/>
<dbReference type="OrthoDB" id="9807568at2"/>
<dbReference type="Proteomes" id="UP000000263">
    <property type="component" value="Chromosome"/>
</dbReference>
<dbReference type="GO" id="GO:0005886">
    <property type="term" value="C:plasma membrane"/>
    <property type="evidence" value="ECO:0007669"/>
    <property type="project" value="UniProtKB-SubCell"/>
</dbReference>
<dbReference type="GO" id="GO:0008137">
    <property type="term" value="F:NADH dehydrogenase (ubiquinone) activity"/>
    <property type="evidence" value="ECO:0007669"/>
    <property type="project" value="InterPro"/>
</dbReference>
<dbReference type="GO" id="GO:0050136">
    <property type="term" value="F:NADH:ubiquinone reductase (non-electrogenic) activity"/>
    <property type="evidence" value="ECO:0007669"/>
    <property type="project" value="UniProtKB-UniRule"/>
</dbReference>
<dbReference type="GO" id="GO:0048038">
    <property type="term" value="F:quinone binding"/>
    <property type="evidence" value="ECO:0007669"/>
    <property type="project" value="UniProtKB-KW"/>
</dbReference>
<dbReference type="GO" id="GO:0042773">
    <property type="term" value="P:ATP synthesis coupled electron transport"/>
    <property type="evidence" value="ECO:0007669"/>
    <property type="project" value="InterPro"/>
</dbReference>
<dbReference type="HAMAP" id="MF_00445">
    <property type="entry name" value="NDH1_NuoN_1"/>
    <property type="match status" value="1"/>
</dbReference>
<dbReference type="InterPro" id="IPR010096">
    <property type="entry name" value="NADH-Q_OxRdtase_suN/2"/>
</dbReference>
<dbReference type="InterPro" id="IPR001750">
    <property type="entry name" value="ND/Mrp_TM"/>
</dbReference>
<dbReference type="NCBIfam" id="TIGR01770">
    <property type="entry name" value="NDH_I_N"/>
    <property type="match status" value="1"/>
</dbReference>
<dbReference type="PANTHER" id="PTHR22773">
    <property type="entry name" value="NADH DEHYDROGENASE"/>
    <property type="match status" value="1"/>
</dbReference>
<dbReference type="Pfam" id="PF00361">
    <property type="entry name" value="Proton_antipo_M"/>
    <property type="match status" value="1"/>
</dbReference>
<dbReference type="PRINTS" id="PR01434">
    <property type="entry name" value="NADHDHGNASE5"/>
</dbReference>
<organism>
    <name type="scientific">Roseiflexus castenholzii (strain DSM 13941 / HLO8)</name>
    <dbReference type="NCBI Taxonomy" id="383372"/>
    <lineage>
        <taxon>Bacteria</taxon>
        <taxon>Bacillati</taxon>
        <taxon>Chloroflexota</taxon>
        <taxon>Chloroflexia</taxon>
        <taxon>Chloroflexales</taxon>
        <taxon>Roseiflexineae</taxon>
        <taxon>Roseiflexaceae</taxon>
        <taxon>Roseiflexus</taxon>
    </lineage>
</organism>
<name>NUON2_ROSCS</name>
<protein>
    <recommendedName>
        <fullName evidence="1">NADH-quinone oxidoreductase subunit N 2</fullName>
        <ecNumber evidence="1">7.1.1.-</ecNumber>
    </recommendedName>
    <alternativeName>
        <fullName evidence="1">NADH dehydrogenase I subunit N 2</fullName>
    </alternativeName>
    <alternativeName>
        <fullName evidence="1">NDH-1 subunit N 2</fullName>
    </alternativeName>
</protein>
<reference key="1">
    <citation type="submission" date="2007-08" db="EMBL/GenBank/DDBJ databases">
        <title>Complete sequence of Roseiflexus castenholzii DSM 13941.</title>
        <authorList>
            <consortium name="US DOE Joint Genome Institute"/>
            <person name="Copeland A."/>
            <person name="Lucas S."/>
            <person name="Lapidus A."/>
            <person name="Barry K."/>
            <person name="Glavina del Rio T."/>
            <person name="Dalin E."/>
            <person name="Tice H."/>
            <person name="Pitluck S."/>
            <person name="Thompson L.S."/>
            <person name="Brettin T."/>
            <person name="Bruce D."/>
            <person name="Detter J.C."/>
            <person name="Han C."/>
            <person name="Tapia R."/>
            <person name="Schmutz J."/>
            <person name="Larimer F."/>
            <person name="Land M."/>
            <person name="Hauser L."/>
            <person name="Kyrpides N."/>
            <person name="Mikhailova N."/>
            <person name="Bryant D.A."/>
            <person name="Hanada S."/>
            <person name="Tsukatani Y."/>
            <person name="Richardson P."/>
        </authorList>
    </citation>
    <scope>NUCLEOTIDE SEQUENCE [LARGE SCALE GENOMIC DNA]</scope>
    <source>
        <strain>DSM 13941 / HLO8</strain>
    </source>
</reference>
<sequence>MWNDTQMTEIVIPPVDWRVATQLSIIFGWASVLLVIALFVPRSRTRIVGYLAMVGAMVAAAVGIPLWGVNAETFSGMLRLDSYSLTLNWLFLAAAAITMVLSLDYLPRQGIERSEYYVLVLFATGGMMLLAQGADLIILFLGLELLSIVLYVLTGFAYPRNASEEAGMKYLLIGAFAGGFVVFGIALLYGATGSMNLRAIGETLAQQTLTLEERIYLLAGAALVVVGFGYKVAMAPFHMWAPDVYEGAPTPIAGLLSVGSKAAGFAALLRFLVEALAGEWQIWAPVLAVLAIATLAVGNIGALTQRNVKRMLAYSSIGHAGYILFGVIAAGAPGGIAGQRGVEGVLLYLIAYTFTNLGAFGVLIALEHRGEAAWDMSDLAGLWSRRPWLAVAMAVCMLSLAGVPPTGGFWGKFYVFTAAWLSGMGWITVIGVIVAAIAAFYYLRIVAQMFMAEPAREVPLPMDRALRAGLALATLGVLILGFLPTPAIDLVQRVVLGG</sequence>
<feature type="chain" id="PRO_0000391216" description="NADH-quinone oxidoreductase subunit N 2">
    <location>
        <begin position="1"/>
        <end position="498"/>
    </location>
</feature>
<feature type="transmembrane region" description="Helical" evidence="1">
    <location>
        <begin position="19"/>
        <end position="39"/>
    </location>
</feature>
<feature type="transmembrane region" description="Helical" evidence="1">
    <location>
        <begin position="47"/>
        <end position="67"/>
    </location>
</feature>
<feature type="transmembrane region" description="Helical" evidence="1">
    <location>
        <begin position="83"/>
        <end position="103"/>
    </location>
</feature>
<feature type="transmembrane region" description="Helical" evidence="1">
    <location>
        <begin position="114"/>
        <end position="134"/>
    </location>
</feature>
<feature type="transmembrane region" description="Helical" evidence="1">
    <location>
        <begin position="136"/>
        <end position="156"/>
    </location>
</feature>
<feature type="transmembrane region" description="Helical" evidence="1">
    <location>
        <begin position="171"/>
        <end position="191"/>
    </location>
</feature>
<feature type="transmembrane region" description="Helical" evidence="1">
    <location>
        <begin position="215"/>
        <end position="235"/>
    </location>
</feature>
<feature type="transmembrane region" description="Helical" evidence="1">
    <location>
        <begin position="249"/>
        <end position="269"/>
    </location>
</feature>
<feature type="transmembrane region" description="Helical" evidence="1">
    <location>
        <begin position="282"/>
        <end position="302"/>
    </location>
</feature>
<feature type="transmembrane region" description="Helical" evidence="1">
    <location>
        <begin position="317"/>
        <end position="337"/>
    </location>
</feature>
<feature type="transmembrane region" description="Helical" evidence="1">
    <location>
        <begin position="345"/>
        <end position="365"/>
    </location>
</feature>
<feature type="transmembrane region" description="Helical" evidence="1">
    <location>
        <begin position="389"/>
        <end position="409"/>
    </location>
</feature>
<feature type="transmembrane region" description="Helical" evidence="1">
    <location>
        <begin position="420"/>
        <end position="440"/>
    </location>
</feature>
<feature type="transmembrane region" description="Helical" evidence="1">
    <location>
        <begin position="468"/>
        <end position="488"/>
    </location>
</feature>
<keyword id="KW-1003">Cell membrane</keyword>
<keyword id="KW-0472">Membrane</keyword>
<keyword id="KW-0520">NAD</keyword>
<keyword id="KW-0874">Quinone</keyword>
<keyword id="KW-1185">Reference proteome</keyword>
<keyword id="KW-1278">Translocase</keyword>
<keyword id="KW-0812">Transmembrane</keyword>
<keyword id="KW-1133">Transmembrane helix</keyword>
<keyword id="KW-0813">Transport</keyword>
<keyword id="KW-0830">Ubiquinone</keyword>
<comment type="function">
    <text evidence="1">NDH-1 shuttles electrons from NADH, via FMN and iron-sulfur (Fe-S) centers, to quinones in the respiratory chain. The immediate electron acceptor for the enzyme in this species is believed to be ubiquinone. Couples the redox reaction to proton translocation (for every two electrons transferred, four hydrogen ions are translocated across the cytoplasmic membrane), and thus conserves the redox energy in a proton gradient.</text>
</comment>
<comment type="catalytic activity">
    <reaction evidence="1">
        <text>a quinone + NADH + 5 H(+)(in) = a quinol + NAD(+) + 4 H(+)(out)</text>
        <dbReference type="Rhea" id="RHEA:57888"/>
        <dbReference type="ChEBI" id="CHEBI:15378"/>
        <dbReference type="ChEBI" id="CHEBI:24646"/>
        <dbReference type="ChEBI" id="CHEBI:57540"/>
        <dbReference type="ChEBI" id="CHEBI:57945"/>
        <dbReference type="ChEBI" id="CHEBI:132124"/>
    </reaction>
</comment>
<comment type="subunit">
    <text evidence="1">NDH-1 is composed of 14 different subunits. Subunits NuoA, H, J, K, L, M, N constitute the membrane sector of the complex.</text>
</comment>
<comment type="subcellular location">
    <subcellularLocation>
        <location evidence="1">Cell membrane</location>
        <topology evidence="1">Multi-pass membrane protein</topology>
    </subcellularLocation>
</comment>
<comment type="similarity">
    <text evidence="1">Belongs to the complex I subunit 2 family.</text>
</comment>
<accession>A7NPD6</accession>
<evidence type="ECO:0000255" key="1">
    <source>
        <dbReference type="HAMAP-Rule" id="MF_00445"/>
    </source>
</evidence>
<proteinExistence type="inferred from homology"/>
<gene>
    <name evidence="1" type="primary">nuoN2</name>
    <name type="ordered locus">Rcas_3382</name>
</gene>